<gene>
    <name type="ordered locus">AZC_4184</name>
</gene>
<dbReference type="EMBL" id="AP009384">
    <property type="protein sequence ID" value="BAF90182.1"/>
    <property type="molecule type" value="Genomic_DNA"/>
</dbReference>
<dbReference type="RefSeq" id="WP_012172704.1">
    <property type="nucleotide sequence ID" value="NC_009937.1"/>
</dbReference>
<dbReference type="STRING" id="438753.AZC_4184"/>
<dbReference type="KEGG" id="azc:AZC_4184"/>
<dbReference type="eggNOG" id="COG5487">
    <property type="taxonomic scope" value="Bacteria"/>
</dbReference>
<dbReference type="HOGENOM" id="CLU_187346_0_0_5"/>
<dbReference type="Proteomes" id="UP000000270">
    <property type="component" value="Chromosome"/>
</dbReference>
<dbReference type="GO" id="GO:0005886">
    <property type="term" value="C:plasma membrane"/>
    <property type="evidence" value="ECO:0007669"/>
    <property type="project" value="UniProtKB-SubCell"/>
</dbReference>
<dbReference type="HAMAP" id="MF_01361">
    <property type="entry name" value="UPF0391"/>
    <property type="match status" value="1"/>
</dbReference>
<dbReference type="InterPro" id="IPR009760">
    <property type="entry name" value="DUF1328"/>
</dbReference>
<dbReference type="NCBIfam" id="NF010226">
    <property type="entry name" value="PRK13682.1-1"/>
    <property type="match status" value="1"/>
</dbReference>
<dbReference type="NCBIfam" id="NF010228">
    <property type="entry name" value="PRK13682.1-3"/>
    <property type="match status" value="1"/>
</dbReference>
<dbReference type="NCBIfam" id="NF010229">
    <property type="entry name" value="PRK13682.1-4"/>
    <property type="match status" value="1"/>
</dbReference>
<dbReference type="Pfam" id="PF07043">
    <property type="entry name" value="DUF1328"/>
    <property type="match status" value="1"/>
</dbReference>
<dbReference type="PIRSF" id="PIRSF036466">
    <property type="entry name" value="UCP036466"/>
    <property type="match status" value="1"/>
</dbReference>
<organism>
    <name type="scientific">Azorhizobium caulinodans (strain ATCC 43989 / DSM 5975 / JCM 20966 / LMG 6465 / NBRC 14845 / NCIMB 13405 / ORS 571)</name>
    <dbReference type="NCBI Taxonomy" id="438753"/>
    <lineage>
        <taxon>Bacteria</taxon>
        <taxon>Pseudomonadati</taxon>
        <taxon>Pseudomonadota</taxon>
        <taxon>Alphaproteobacteria</taxon>
        <taxon>Hyphomicrobiales</taxon>
        <taxon>Xanthobacteraceae</taxon>
        <taxon>Azorhizobium</taxon>
    </lineage>
</organism>
<feature type="chain" id="PRO_1000073379" description="UPF0391 membrane protein AZC_4184">
    <location>
        <begin position="1"/>
        <end position="59"/>
    </location>
</feature>
<feature type="transmembrane region" description="Helical" evidence="1">
    <location>
        <begin position="4"/>
        <end position="24"/>
    </location>
</feature>
<feature type="transmembrane region" description="Helical" evidence="1">
    <location>
        <begin position="30"/>
        <end position="50"/>
    </location>
</feature>
<comment type="subcellular location">
    <subcellularLocation>
        <location evidence="1">Cell membrane</location>
        <topology evidence="1">Multi-pass membrane protein</topology>
    </subcellularLocation>
</comment>
<comment type="similarity">
    <text evidence="1">Belongs to the UPF0391 family.</text>
</comment>
<name>Y4184_AZOC5</name>
<evidence type="ECO:0000255" key="1">
    <source>
        <dbReference type="HAMAP-Rule" id="MF_01361"/>
    </source>
</evidence>
<reference key="1">
    <citation type="submission" date="2007-04" db="EMBL/GenBank/DDBJ databases">
        <title>Complete genome sequence of the nitrogen-fixing bacterium Azorhizobium caulinodans ORS571.</title>
        <authorList>
            <person name="Lee K.B."/>
            <person name="Backer P.D."/>
            <person name="Aono T."/>
            <person name="Liu C.T."/>
            <person name="Suzuki S."/>
            <person name="Suzuki T."/>
            <person name="Kaneko T."/>
            <person name="Yamada M."/>
            <person name="Tabata S."/>
            <person name="Kupfer D.M."/>
            <person name="Najar F.Z."/>
            <person name="Wiley G.B."/>
            <person name="Roe B."/>
            <person name="Binnewies T."/>
            <person name="Ussery D."/>
            <person name="Vereecke D."/>
            <person name="Gevers D."/>
            <person name="Holsters M."/>
            <person name="Oyaizu H."/>
        </authorList>
    </citation>
    <scope>NUCLEOTIDE SEQUENCE [LARGE SCALE GENOMIC DNA]</scope>
    <source>
        <strain>ATCC 43989 / DSM 5975 / JCM 20966 / LMG 6465 / NBRC 14845 / NCIMB 13405 / ORS 571</strain>
    </source>
</reference>
<keyword id="KW-1003">Cell membrane</keyword>
<keyword id="KW-0472">Membrane</keyword>
<keyword id="KW-1185">Reference proteome</keyword>
<keyword id="KW-0812">Transmembrane</keyword>
<keyword id="KW-1133">Transmembrane helix</keyword>
<protein>
    <recommendedName>
        <fullName evidence="1">UPF0391 membrane protein AZC_4184</fullName>
    </recommendedName>
</protein>
<accession>A8HSH8</accession>
<sequence length="59" mass="6288">MLSWALTFLVVAIIAAVLGFTAVAGTAIEIAKIIFYVAIVLFLISAVMGFLRRGSSRTL</sequence>
<proteinExistence type="inferred from homology"/>